<sequence>MKQILILDFGSQYTQLIARRLREEQIYCEILPFNTKYEDIIALDPAGVILSGGPSSVYGAGAPKPDPKIFSIDKPVLGICYGMQLLAVNGGGKVTACKKREYGFAEVKIKASTSKLLKGMPKKFTAWMSHGDGVHAMPKNFKVTATTSTSPFSAAEDDKNKRYAVQFHPEVVHTAHGSKILKNFARVICGYKEKWTPASIMTASIAAMKKQIGKGHVICGLSGGVDSSVVAALLAKAIGKNLYCIYVDTGLLRTGDRERTEGLAKKLKVNLKIVDAEKLFLTKLAGVTDPEKKRKIIGALFIEVFEKEAKKFKDAQFLAQGTLYPDVIESMSVKGPSDVIKSHHNVGGLPEKMNLKLVEPLRFLFKDEVRALGRELGLGSEIVDIHPFPGPGLAVRILGAVNKPDLDTLRAADFIVREELYKSGWDKKSWQAFAVLLPIKTVGVMGDERTYEKAACVRCVNSVDGMTADWTKLPYDVLQKISGRIISEVRGINKVVYDITSKPPSTIEWE</sequence>
<gene>
    <name evidence="1" type="primary">guaA</name>
    <name type="ordered locus">Emin_0769</name>
</gene>
<dbReference type="EC" id="6.3.5.2" evidence="1"/>
<dbReference type="EMBL" id="CP001055">
    <property type="protein sequence ID" value="ACC98324.1"/>
    <property type="molecule type" value="Genomic_DNA"/>
</dbReference>
<dbReference type="RefSeq" id="WP_012414939.1">
    <property type="nucleotide sequence ID" value="NC_010644.1"/>
</dbReference>
<dbReference type="SMR" id="B2KCS8"/>
<dbReference type="STRING" id="445932.Emin_0769"/>
<dbReference type="MEROPS" id="C26.957"/>
<dbReference type="KEGG" id="emi:Emin_0769"/>
<dbReference type="HOGENOM" id="CLU_014340_0_5_0"/>
<dbReference type="OrthoDB" id="9802219at2"/>
<dbReference type="UniPathway" id="UPA00189">
    <property type="reaction ID" value="UER00296"/>
</dbReference>
<dbReference type="Proteomes" id="UP000001029">
    <property type="component" value="Chromosome"/>
</dbReference>
<dbReference type="GO" id="GO:0005829">
    <property type="term" value="C:cytosol"/>
    <property type="evidence" value="ECO:0007669"/>
    <property type="project" value="TreeGrafter"/>
</dbReference>
<dbReference type="GO" id="GO:0005524">
    <property type="term" value="F:ATP binding"/>
    <property type="evidence" value="ECO:0007669"/>
    <property type="project" value="UniProtKB-UniRule"/>
</dbReference>
<dbReference type="GO" id="GO:0003921">
    <property type="term" value="F:GMP synthase activity"/>
    <property type="evidence" value="ECO:0007669"/>
    <property type="project" value="InterPro"/>
</dbReference>
<dbReference type="CDD" id="cd01742">
    <property type="entry name" value="GATase1_GMP_Synthase"/>
    <property type="match status" value="1"/>
</dbReference>
<dbReference type="CDD" id="cd01997">
    <property type="entry name" value="GMP_synthase_C"/>
    <property type="match status" value="1"/>
</dbReference>
<dbReference type="FunFam" id="3.30.300.10:FF:000002">
    <property type="entry name" value="GMP synthase [glutamine-hydrolyzing]"/>
    <property type="match status" value="1"/>
</dbReference>
<dbReference type="FunFam" id="3.40.50.620:FF:000001">
    <property type="entry name" value="GMP synthase [glutamine-hydrolyzing]"/>
    <property type="match status" value="1"/>
</dbReference>
<dbReference type="FunFam" id="3.40.50.880:FF:000001">
    <property type="entry name" value="GMP synthase [glutamine-hydrolyzing]"/>
    <property type="match status" value="1"/>
</dbReference>
<dbReference type="Gene3D" id="3.30.300.10">
    <property type="match status" value="1"/>
</dbReference>
<dbReference type="Gene3D" id="3.40.50.880">
    <property type="match status" value="1"/>
</dbReference>
<dbReference type="Gene3D" id="3.40.50.620">
    <property type="entry name" value="HUPs"/>
    <property type="match status" value="1"/>
</dbReference>
<dbReference type="HAMAP" id="MF_00344">
    <property type="entry name" value="GMP_synthase"/>
    <property type="match status" value="1"/>
</dbReference>
<dbReference type="InterPro" id="IPR029062">
    <property type="entry name" value="Class_I_gatase-like"/>
</dbReference>
<dbReference type="InterPro" id="IPR017926">
    <property type="entry name" value="GATASE"/>
</dbReference>
<dbReference type="InterPro" id="IPR001674">
    <property type="entry name" value="GMP_synth_C"/>
</dbReference>
<dbReference type="InterPro" id="IPR004739">
    <property type="entry name" value="GMP_synth_GATase"/>
</dbReference>
<dbReference type="InterPro" id="IPR022955">
    <property type="entry name" value="GMP_synthase"/>
</dbReference>
<dbReference type="InterPro" id="IPR025777">
    <property type="entry name" value="GMPS_ATP_PPase_dom"/>
</dbReference>
<dbReference type="InterPro" id="IPR022310">
    <property type="entry name" value="NAD/GMP_synthase"/>
</dbReference>
<dbReference type="InterPro" id="IPR014729">
    <property type="entry name" value="Rossmann-like_a/b/a_fold"/>
</dbReference>
<dbReference type="NCBIfam" id="TIGR00884">
    <property type="entry name" value="guaA_Cterm"/>
    <property type="match status" value="1"/>
</dbReference>
<dbReference type="NCBIfam" id="TIGR00888">
    <property type="entry name" value="guaA_Nterm"/>
    <property type="match status" value="1"/>
</dbReference>
<dbReference type="NCBIfam" id="NF000848">
    <property type="entry name" value="PRK00074.1"/>
    <property type="match status" value="1"/>
</dbReference>
<dbReference type="PANTHER" id="PTHR11922:SF2">
    <property type="entry name" value="GMP SYNTHASE [GLUTAMINE-HYDROLYZING]"/>
    <property type="match status" value="1"/>
</dbReference>
<dbReference type="PANTHER" id="PTHR11922">
    <property type="entry name" value="GMP SYNTHASE-RELATED"/>
    <property type="match status" value="1"/>
</dbReference>
<dbReference type="Pfam" id="PF00117">
    <property type="entry name" value="GATase"/>
    <property type="match status" value="1"/>
</dbReference>
<dbReference type="Pfam" id="PF00958">
    <property type="entry name" value="GMP_synt_C"/>
    <property type="match status" value="1"/>
</dbReference>
<dbReference type="Pfam" id="PF02540">
    <property type="entry name" value="NAD_synthase"/>
    <property type="match status" value="1"/>
</dbReference>
<dbReference type="PRINTS" id="PR00097">
    <property type="entry name" value="ANTSNTHASEII"/>
</dbReference>
<dbReference type="PRINTS" id="PR00099">
    <property type="entry name" value="CPSGATASE"/>
</dbReference>
<dbReference type="PRINTS" id="PR00096">
    <property type="entry name" value="GATASE"/>
</dbReference>
<dbReference type="SUPFAM" id="SSF52402">
    <property type="entry name" value="Adenine nucleotide alpha hydrolases-like"/>
    <property type="match status" value="1"/>
</dbReference>
<dbReference type="SUPFAM" id="SSF52317">
    <property type="entry name" value="Class I glutamine amidotransferase-like"/>
    <property type="match status" value="1"/>
</dbReference>
<dbReference type="SUPFAM" id="SSF54810">
    <property type="entry name" value="GMP synthetase C-terminal dimerisation domain"/>
    <property type="match status" value="1"/>
</dbReference>
<dbReference type="PROSITE" id="PS51273">
    <property type="entry name" value="GATASE_TYPE_1"/>
    <property type="match status" value="1"/>
</dbReference>
<dbReference type="PROSITE" id="PS51553">
    <property type="entry name" value="GMPS_ATP_PPASE"/>
    <property type="match status" value="1"/>
</dbReference>
<reference key="1">
    <citation type="journal article" date="2009" name="Appl. Environ. Microbiol.">
        <title>Genomic analysis of 'Elusimicrobium minutum,' the first cultivated representative of the phylum 'Elusimicrobia' (formerly termite group 1).</title>
        <authorList>
            <person name="Herlemann D.P.R."/>
            <person name="Geissinger O."/>
            <person name="Ikeda-Ohtsubo W."/>
            <person name="Kunin V."/>
            <person name="Sun H."/>
            <person name="Lapidus A."/>
            <person name="Hugenholtz P."/>
            <person name="Brune A."/>
        </authorList>
    </citation>
    <scope>NUCLEOTIDE SEQUENCE [LARGE SCALE GENOMIC DNA]</scope>
    <source>
        <strain>Pei191</strain>
    </source>
</reference>
<organism>
    <name type="scientific">Elusimicrobium minutum (strain Pei191)</name>
    <dbReference type="NCBI Taxonomy" id="445932"/>
    <lineage>
        <taxon>Bacteria</taxon>
        <taxon>Pseudomonadati</taxon>
        <taxon>Elusimicrobiota</taxon>
        <taxon>Elusimicrobia</taxon>
        <taxon>Elusimicrobiales</taxon>
        <taxon>Elusimicrobiaceae</taxon>
        <taxon>Elusimicrobium</taxon>
    </lineage>
</organism>
<comment type="function">
    <text evidence="1">Catalyzes the synthesis of GMP from XMP.</text>
</comment>
<comment type="catalytic activity">
    <reaction evidence="1">
        <text>XMP + L-glutamine + ATP + H2O = GMP + L-glutamate + AMP + diphosphate + 2 H(+)</text>
        <dbReference type="Rhea" id="RHEA:11680"/>
        <dbReference type="ChEBI" id="CHEBI:15377"/>
        <dbReference type="ChEBI" id="CHEBI:15378"/>
        <dbReference type="ChEBI" id="CHEBI:29985"/>
        <dbReference type="ChEBI" id="CHEBI:30616"/>
        <dbReference type="ChEBI" id="CHEBI:33019"/>
        <dbReference type="ChEBI" id="CHEBI:57464"/>
        <dbReference type="ChEBI" id="CHEBI:58115"/>
        <dbReference type="ChEBI" id="CHEBI:58359"/>
        <dbReference type="ChEBI" id="CHEBI:456215"/>
        <dbReference type="EC" id="6.3.5.2"/>
    </reaction>
</comment>
<comment type="pathway">
    <text evidence="1">Purine metabolism; GMP biosynthesis; GMP from XMP (L-Gln route): step 1/1.</text>
</comment>
<comment type="subunit">
    <text evidence="1">Homodimer.</text>
</comment>
<proteinExistence type="inferred from homology"/>
<accession>B2KCS8</accession>
<keyword id="KW-0067">ATP-binding</keyword>
<keyword id="KW-0315">Glutamine amidotransferase</keyword>
<keyword id="KW-0332">GMP biosynthesis</keyword>
<keyword id="KW-0436">Ligase</keyword>
<keyword id="KW-0547">Nucleotide-binding</keyword>
<keyword id="KW-0658">Purine biosynthesis</keyword>
<keyword id="KW-1185">Reference proteome</keyword>
<name>GUAA_ELUMP</name>
<feature type="chain" id="PRO_1000120293" description="GMP synthase [glutamine-hydrolyzing]">
    <location>
        <begin position="1"/>
        <end position="510"/>
    </location>
</feature>
<feature type="domain" description="Glutamine amidotransferase type-1" evidence="1">
    <location>
        <begin position="3"/>
        <end position="194"/>
    </location>
</feature>
<feature type="domain" description="GMPS ATP-PPase" evidence="1">
    <location>
        <begin position="195"/>
        <end position="385"/>
    </location>
</feature>
<feature type="active site" description="Nucleophile" evidence="1">
    <location>
        <position position="80"/>
    </location>
</feature>
<feature type="active site" evidence="1">
    <location>
        <position position="168"/>
    </location>
</feature>
<feature type="active site" evidence="1">
    <location>
        <position position="170"/>
    </location>
</feature>
<feature type="binding site" evidence="1">
    <location>
        <begin position="222"/>
        <end position="228"/>
    </location>
    <ligand>
        <name>ATP</name>
        <dbReference type="ChEBI" id="CHEBI:30616"/>
    </ligand>
</feature>
<evidence type="ECO:0000255" key="1">
    <source>
        <dbReference type="HAMAP-Rule" id="MF_00344"/>
    </source>
</evidence>
<protein>
    <recommendedName>
        <fullName evidence="1">GMP synthase [glutamine-hydrolyzing]</fullName>
        <ecNumber evidence="1">6.3.5.2</ecNumber>
    </recommendedName>
    <alternativeName>
        <fullName evidence="1">GMP synthetase</fullName>
    </alternativeName>
    <alternativeName>
        <fullName evidence="1">Glutamine amidotransferase</fullName>
    </alternativeName>
</protein>